<organism>
    <name type="scientific">Escherichia coli O1:K1 / APEC</name>
    <dbReference type="NCBI Taxonomy" id="405955"/>
    <lineage>
        <taxon>Bacteria</taxon>
        <taxon>Pseudomonadati</taxon>
        <taxon>Pseudomonadota</taxon>
        <taxon>Gammaproteobacteria</taxon>
        <taxon>Enterobacterales</taxon>
        <taxon>Enterobacteriaceae</taxon>
        <taxon>Escherichia</taxon>
    </lineage>
</organism>
<protein>
    <recommendedName>
        <fullName>S-formylglutathione hydrolase YeiG</fullName>
        <shortName>FGH</shortName>
        <ecNumber>3.1.2.12</ecNumber>
    </recommendedName>
</protein>
<dbReference type="EC" id="3.1.2.12"/>
<dbReference type="EMBL" id="CP000468">
    <property type="protein sequence ID" value="ABJ01554.1"/>
    <property type="molecule type" value="Genomic_DNA"/>
</dbReference>
<dbReference type="RefSeq" id="WP_000425456.1">
    <property type="nucleotide sequence ID" value="NZ_CADILS010000004.1"/>
</dbReference>
<dbReference type="SMR" id="A1AD14"/>
<dbReference type="ESTHER" id="ecoli-yeiG">
    <property type="family name" value="A85-EsteraseD-FGH"/>
</dbReference>
<dbReference type="MEROPS" id="S09.A39"/>
<dbReference type="KEGG" id="ecv:APECO1_4397"/>
<dbReference type="HOGENOM" id="CLU_056472_0_0_6"/>
<dbReference type="Proteomes" id="UP000008216">
    <property type="component" value="Chromosome"/>
</dbReference>
<dbReference type="GO" id="GO:0005829">
    <property type="term" value="C:cytosol"/>
    <property type="evidence" value="ECO:0007669"/>
    <property type="project" value="TreeGrafter"/>
</dbReference>
<dbReference type="GO" id="GO:0052689">
    <property type="term" value="F:carboxylic ester hydrolase activity"/>
    <property type="evidence" value="ECO:0007669"/>
    <property type="project" value="UniProtKB-KW"/>
</dbReference>
<dbReference type="GO" id="GO:0018738">
    <property type="term" value="F:S-formylglutathione hydrolase activity"/>
    <property type="evidence" value="ECO:0007669"/>
    <property type="project" value="UniProtKB-EC"/>
</dbReference>
<dbReference type="GO" id="GO:0046294">
    <property type="term" value="P:formaldehyde catabolic process"/>
    <property type="evidence" value="ECO:0007669"/>
    <property type="project" value="InterPro"/>
</dbReference>
<dbReference type="FunFam" id="3.40.50.1820:FF:000002">
    <property type="entry name" value="S-formylglutathione hydrolase"/>
    <property type="match status" value="1"/>
</dbReference>
<dbReference type="Gene3D" id="3.40.50.1820">
    <property type="entry name" value="alpha/beta hydrolase"/>
    <property type="match status" value="1"/>
</dbReference>
<dbReference type="InterPro" id="IPR029058">
    <property type="entry name" value="AB_hydrolase_fold"/>
</dbReference>
<dbReference type="InterPro" id="IPR000801">
    <property type="entry name" value="Esterase-like"/>
</dbReference>
<dbReference type="InterPro" id="IPR014186">
    <property type="entry name" value="S-formylglutathione_hydrol"/>
</dbReference>
<dbReference type="NCBIfam" id="TIGR02821">
    <property type="entry name" value="fghA_ester_D"/>
    <property type="match status" value="1"/>
</dbReference>
<dbReference type="PANTHER" id="PTHR10061">
    <property type="entry name" value="S-FORMYLGLUTATHIONE HYDROLASE"/>
    <property type="match status" value="1"/>
</dbReference>
<dbReference type="PANTHER" id="PTHR10061:SF1">
    <property type="entry name" value="S-FORMYLGLUTATHIONE HYDROLASE YEIG"/>
    <property type="match status" value="1"/>
</dbReference>
<dbReference type="Pfam" id="PF00756">
    <property type="entry name" value="Esterase"/>
    <property type="match status" value="1"/>
</dbReference>
<dbReference type="SUPFAM" id="SSF53474">
    <property type="entry name" value="alpha/beta-Hydrolases"/>
    <property type="match status" value="1"/>
</dbReference>
<keyword id="KW-0378">Hydrolase</keyword>
<keyword id="KW-1185">Reference proteome</keyword>
<keyword id="KW-0719">Serine esterase</keyword>
<sequence length="278" mass="31287">MEMLEEHRCFEGWQQRWRHDSSTLNCPMTFSIFLPPPRDHTPPPVLYWLSGLTCNDENFTTKAGAQRVAAELGIVLVMPDTSPRGEQVANDDGYDLGQGAGFYLNATQPPWATHYRMYDYLRDELPALIQSQFNVSDRCAISGHSMGGHGALIMALKNPGKYTSVSAFAPIVNPCSVPWGIKAFSTYLGEDKNAWLEWDSCALMYASNAQDAIPTLIDQGDNDQFLADQLQPAVLAEAARQKAWPMTLRIQPGYDHSYYFIASFIEDHLRFHAQYLLK</sequence>
<proteinExistence type="inferred from homology"/>
<name>SFGH2_ECOK1</name>
<comment type="function">
    <text evidence="1">Serine hydrolase involved in the detoxification of formaldehyde. Hydrolyzes S-formylglutathione to glutathione and formate (By similarity).</text>
</comment>
<comment type="catalytic activity">
    <reaction>
        <text>S-formylglutathione + H2O = formate + glutathione + H(+)</text>
        <dbReference type="Rhea" id="RHEA:14961"/>
        <dbReference type="ChEBI" id="CHEBI:15377"/>
        <dbReference type="ChEBI" id="CHEBI:15378"/>
        <dbReference type="ChEBI" id="CHEBI:15740"/>
        <dbReference type="ChEBI" id="CHEBI:57688"/>
        <dbReference type="ChEBI" id="CHEBI:57925"/>
        <dbReference type="EC" id="3.1.2.12"/>
    </reaction>
</comment>
<comment type="similarity">
    <text evidence="2">Belongs to the esterase D family.</text>
</comment>
<feature type="chain" id="PRO_0000341671" description="S-formylglutathione hydrolase YeiG">
    <location>
        <begin position="1"/>
        <end position="278"/>
    </location>
</feature>
<feature type="active site" description="Charge relay system" evidence="1">
    <location>
        <position position="145"/>
    </location>
</feature>
<feature type="active site" description="Charge relay system" evidence="1">
    <location>
        <position position="223"/>
    </location>
</feature>
<feature type="active site" description="Charge relay system" evidence="1">
    <location>
        <position position="256"/>
    </location>
</feature>
<accession>A1AD14</accession>
<gene>
    <name type="primary">yeiG</name>
    <name type="ordered locus">Ecok1_20600</name>
    <name type="ORF">APECO1_4397</name>
</gene>
<evidence type="ECO:0000250" key="1"/>
<evidence type="ECO:0000305" key="2"/>
<reference key="1">
    <citation type="journal article" date="2007" name="J. Bacteriol.">
        <title>The genome sequence of avian pathogenic Escherichia coli strain O1:K1:H7 shares strong similarities with human extraintestinal pathogenic E. coli genomes.</title>
        <authorList>
            <person name="Johnson T.J."/>
            <person name="Kariyawasam S."/>
            <person name="Wannemuehler Y."/>
            <person name="Mangiamele P."/>
            <person name="Johnson S.J."/>
            <person name="Doetkott C."/>
            <person name="Skyberg J.A."/>
            <person name="Lynne A.M."/>
            <person name="Johnson J.R."/>
            <person name="Nolan L.K."/>
        </authorList>
    </citation>
    <scope>NUCLEOTIDE SEQUENCE [LARGE SCALE GENOMIC DNA]</scope>
</reference>